<name>CBPYA_AJEDR</name>
<evidence type="ECO:0000250" key="1"/>
<evidence type="ECO:0000255" key="2"/>
<evidence type="ECO:0000255" key="3">
    <source>
        <dbReference type="PROSITE-ProRule" id="PRU10074"/>
    </source>
</evidence>
<evidence type="ECO:0000305" key="4"/>
<reference key="1">
    <citation type="journal article" date="2015" name="PLoS Genet.">
        <title>The dynamic genome and transcriptome of the human fungal pathogen Blastomyces and close relative Emmonsia.</title>
        <authorList>
            <person name="Munoz J.F."/>
            <person name="Gauthier G.M."/>
            <person name="Desjardins C.A."/>
            <person name="Gallo J.E."/>
            <person name="Holder J."/>
            <person name="Sullivan T.D."/>
            <person name="Marty A.J."/>
            <person name="Carmen J.C."/>
            <person name="Chen Z."/>
            <person name="Ding L."/>
            <person name="Gujja S."/>
            <person name="Magrini V."/>
            <person name="Misas E."/>
            <person name="Mitreva M."/>
            <person name="Priest M."/>
            <person name="Saif S."/>
            <person name="Whiston E.A."/>
            <person name="Young S."/>
            <person name="Zeng Q."/>
            <person name="Goldman W.E."/>
            <person name="Mardis E.R."/>
            <person name="Taylor J.W."/>
            <person name="McEwen J.G."/>
            <person name="Clay O.K."/>
            <person name="Klein B.S."/>
            <person name="Cuomo C.A."/>
        </authorList>
    </citation>
    <scope>NUCLEOTIDE SEQUENCE [LARGE SCALE GENOMIC DNA]</scope>
    <source>
        <strain>ER-3 / ATCC MYA-2586</strain>
    </source>
</reference>
<gene>
    <name type="primary">CPYA</name>
    <name type="ORF">BDCG_02414</name>
</gene>
<feature type="signal peptide" evidence="2">
    <location>
        <begin position="1"/>
        <end position="17"/>
    </location>
</feature>
<feature type="propeptide" id="PRO_0000407420" evidence="1">
    <location>
        <begin position="18"/>
        <end position="123"/>
    </location>
</feature>
<feature type="chain" id="PRO_0000407421" description="Carboxypeptidase Y homolog A">
    <location>
        <begin position="124"/>
        <end position="545"/>
    </location>
</feature>
<feature type="active site" evidence="3">
    <location>
        <position position="264"/>
    </location>
</feature>
<feature type="active site" evidence="3">
    <location>
        <position position="455"/>
    </location>
</feature>
<feature type="active site" evidence="3">
    <location>
        <position position="517"/>
    </location>
</feature>
<feature type="glycosylation site" description="N-linked (GlcNAc...) asparagine" evidence="2">
    <location>
        <position position="208"/>
    </location>
</feature>
<feature type="glycosylation site" description="N-linked (GlcNAc...) asparagine" evidence="2">
    <location>
        <position position="485"/>
    </location>
</feature>
<feature type="glycosylation site" description="N-linked (GlcNAc...) asparagine" evidence="2">
    <location>
        <position position="491"/>
    </location>
</feature>
<feature type="glycosylation site" description="N-linked (GlcNAc...) asparagine" evidence="2">
    <location>
        <position position="506"/>
    </location>
</feature>
<feature type="disulfide bond" evidence="1">
    <location>
        <begin position="177"/>
        <end position="416"/>
    </location>
</feature>
<feature type="disulfide bond" evidence="1">
    <location>
        <begin position="311"/>
        <end position="325"/>
    </location>
</feature>
<feature type="disulfide bond" evidence="1">
    <location>
        <begin position="335"/>
        <end position="358"/>
    </location>
</feature>
<feature type="disulfide bond" evidence="1">
    <location>
        <begin position="342"/>
        <end position="351"/>
    </location>
</feature>
<feature type="disulfide bond" evidence="1">
    <location>
        <begin position="380"/>
        <end position="386"/>
    </location>
</feature>
<protein>
    <recommendedName>
        <fullName>Carboxypeptidase Y homolog A</fullName>
        <ecNumber>3.4.16.5</ecNumber>
    </recommendedName>
</protein>
<comment type="function">
    <text evidence="1">Vacuolar carboxypeptidase involved in degradation of small peptides. Digests preferentially peptides containing an aliphatic or hydrophobic residue in P1' position, as well as methionine, leucine or phenylalanine in P1 position of ester substrate (By similarity).</text>
</comment>
<comment type="catalytic activity">
    <reaction evidence="3">
        <text>Release of a C-terminal amino acid with broad specificity.</text>
        <dbReference type="EC" id="3.4.16.5"/>
    </reaction>
</comment>
<comment type="subcellular location">
    <subcellularLocation>
        <location evidence="1">Vacuole</location>
    </subcellularLocation>
</comment>
<comment type="similarity">
    <text evidence="4">Belongs to the peptidase S10 family.</text>
</comment>
<sequence length="545" mass="60313">MKSLALALLVGGAIAAGPQQQVLQAPVDNPDVAEPPLQTIADTFDHLRGQATNLWNDVIDKVPNIMDTITHTPPPKKFNRRPDSEWNHIVRGAEIQAVWVEGDDGEKHRKVGGKLEAYDLRVKAVDPKSLGVDTVRQYSGYLDDNENDKHLFYWFFESRNDPENDPVVLWLNGGPGCSSLTGLFLELGPSSITEDLKVNYNPYSWNANASVIFLDQPVNVGYSYSGGSVSDTNAAGKDVYALLTLFFEQFPEYAKQDFHIAGESYAGHYIPVFASEIMAHKERNINLKSILIGNGLTDPLTQYPLYRPMACGEGGYPAVLDQASCQSMDNALPRCLSMIEACYSSESAWTCVPASIYCNNAIIGPYQRTGRNPYDVRTDCEGGNLCYTQLGDISKYLNQAEVMKALGAEVSTYDSCNMDINRNFLFRGDWMKPFHRLVPGLIAEMPVLLYAGDADFICNWLGNKAWAEALEYPGHAKFAAAEMKNLTIVDNKSKGKVIGQVKSAGNFTFMRLYGGGHMVPLDQPEASLEFMNRWLKGEWSAKSSS</sequence>
<dbReference type="EC" id="3.4.16.5"/>
<dbReference type="EMBL" id="EQ999975">
    <property type="protein sequence ID" value="EEQ87294.1"/>
    <property type="molecule type" value="Genomic_DNA"/>
</dbReference>
<dbReference type="SMR" id="C5GEU5"/>
<dbReference type="STRING" id="559297.C5GEU5"/>
<dbReference type="ESTHER" id="ajedr-cbpya">
    <property type="family name" value="Carboxypeptidase_S10"/>
</dbReference>
<dbReference type="MEROPS" id="S10.001"/>
<dbReference type="GlyCosmos" id="C5GEU5">
    <property type="glycosylation" value="4 sites, No reported glycans"/>
</dbReference>
<dbReference type="VEuPathDB" id="FungiDB:BDCG_02414"/>
<dbReference type="eggNOG" id="KOG1282">
    <property type="taxonomic scope" value="Eukaryota"/>
</dbReference>
<dbReference type="HOGENOM" id="CLU_008523_10_4_1"/>
<dbReference type="OMA" id="GDWMKPF"/>
<dbReference type="GO" id="GO:0000324">
    <property type="term" value="C:fungal-type vacuole"/>
    <property type="evidence" value="ECO:0007669"/>
    <property type="project" value="TreeGrafter"/>
</dbReference>
<dbReference type="GO" id="GO:0004185">
    <property type="term" value="F:serine-type carboxypeptidase activity"/>
    <property type="evidence" value="ECO:0007669"/>
    <property type="project" value="UniProtKB-EC"/>
</dbReference>
<dbReference type="GO" id="GO:0006508">
    <property type="term" value="P:proteolysis"/>
    <property type="evidence" value="ECO:0007669"/>
    <property type="project" value="UniProtKB-KW"/>
</dbReference>
<dbReference type="FunFam" id="1.10.287.410:FF:000001">
    <property type="entry name" value="Carboxypeptidase Y"/>
    <property type="match status" value="1"/>
</dbReference>
<dbReference type="Gene3D" id="1.10.287.410">
    <property type="match status" value="1"/>
</dbReference>
<dbReference type="Gene3D" id="3.40.50.1820">
    <property type="entry name" value="alpha/beta hydrolase"/>
    <property type="match status" value="1"/>
</dbReference>
<dbReference type="InterPro" id="IPR029058">
    <property type="entry name" value="AB_hydrolase_fold"/>
</dbReference>
<dbReference type="InterPro" id="IPR001563">
    <property type="entry name" value="Peptidase_S10"/>
</dbReference>
<dbReference type="InterPro" id="IPR018202">
    <property type="entry name" value="Ser_caboxypep_ser_AS"/>
</dbReference>
<dbReference type="PANTHER" id="PTHR11802:SF113">
    <property type="entry name" value="SERINE CARBOXYPEPTIDASE CTSA-4.1"/>
    <property type="match status" value="1"/>
</dbReference>
<dbReference type="PANTHER" id="PTHR11802">
    <property type="entry name" value="SERINE PROTEASE FAMILY S10 SERINE CARBOXYPEPTIDASE"/>
    <property type="match status" value="1"/>
</dbReference>
<dbReference type="Pfam" id="PF00450">
    <property type="entry name" value="Peptidase_S10"/>
    <property type="match status" value="1"/>
</dbReference>
<dbReference type="PRINTS" id="PR00724">
    <property type="entry name" value="CRBOXYPTASEC"/>
</dbReference>
<dbReference type="SUPFAM" id="SSF53474">
    <property type="entry name" value="alpha/beta-Hydrolases"/>
    <property type="match status" value="1"/>
</dbReference>
<dbReference type="PROSITE" id="PS00131">
    <property type="entry name" value="CARBOXYPEPT_SER_SER"/>
    <property type="match status" value="1"/>
</dbReference>
<accession>C5GEU5</accession>
<organism>
    <name type="scientific">Ajellomyces dermatitidis (strain ER-3 / ATCC MYA-2586)</name>
    <name type="common">Blastomyces dermatitidis</name>
    <dbReference type="NCBI Taxonomy" id="559297"/>
    <lineage>
        <taxon>Eukaryota</taxon>
        <taxon>Fungi</taxon>
        <taxon>Dikarya</taxon>
        <taxon>Ascomycota</taxon>
        <taxon>Pezizomycotina</taxon>
        <taxon>Eurotiomycetes</taxon>
        <taxon>Eurotiomycetidae</taxon>
        <taxon>Onygenales</taxon>
        <taxon>Ajellomycetaceae</taxon>
        <taxon>Blastomyces</taxon>
    </lineage>
</organism>
<keyword id="KW-0121">Carboxypeptidase</keyword>
<keyword id="KW-1015">Disulfide bond</keyword>
<keyword id="KW-0325">Glycoprotein</keyword>
<keyword id="KW-0378">Hydrolase</keyword>
<keyword id="KW-0645">Protease</keyword>
<keyword id="KW-0732">Signal</keyword>
<keyword id="KW-0926">Vacuole</keyword>
<keyword id="KW-0865">Zymogen</keyword>
<proteinExistence type="inferred from homology"/>